<sequence>MAIAYAKLYELIHKKIKDEREADELYNAIIEIIKESKVIVKNELKDELKDELATKKDIDLVREEMKAMEERILRYVDNRFNQLLIVQLIILFAIIITNPNAIELIKLLFGFK</sequence>
<protein>
    <recommendedName>
        <fullName>Uncharacterized protein MJ1074</fullName>
    </recommendedName>
</protein>
<feature type="chain" id="PRO_0000107159" description="Uncharacterized protein MJ1074">
    <location>
        <begin position="1"/>
        <end position="112"/>
    </location>
</feature>
<feature type="transmembrane region" description="Helical" evidence="1">
    <location>
        <begin position="85"/>
        <end position="105"/>
    </location>
</feature>
<comment type="subcellular location">
    <subcellularLocation>
        <location evidence="2">Membrane</location>
        <topology evidence="2">Single-pass membrane protein</topology>
    </subcellularLocation>
</comment>
<comment type="similarity">
    <text evidence="2">Belongs to the M.jannaschii MJ0023/MJ0349/MJ1072/MJ1074/MJ1107/MJECL16 family.</text>
</comment>
<reference key="1">
    <citation type="journal article" date="1996" name="Science">
        <title>Complete genome sequence of the methanogenic archaeon, Methanococcus jannaschii.</title>
        <authorList>
            <person name="Bult C.J."/>
            <person name="White O."/>
            <person name="Olsen G.J."/>
            <person name="Zhou L."/>
            <person name="Fleischmann R.D."/>
            <person name="Sutton G.G."/>
            <person name="Blake J.A."/>
            <person name="FitzGerald L.M."/>
            <person name="Clayton R.A."/>
            <person name="Gocayne J.D."/>
            <person name="Kerlavage A.R."/>
            <person name="Dougherty B.A."/>
            <person name="Tomb J.-F."/>
            <person name="Adams M.D."/>
            <person name="Reich C.I."/>
            <person name="Overbeek R."/>
            <person name="Kirkness E.F."/>
            <person name="Weinstock K.G."/>
            <person name="Merrick J.M."/>
            <person name="Glodek A."/>
            <person name="Scott J.L."/>
            <person name="Geoghagen N.S.M."/>
            <person name="Weidman J.F."/>
            <person name="Fuhrmann J.L."/>
            <person name="Nguyen D."/>
            <person name="Utterback T.R."/>
            <person name="Kelley J.M."/>
            <person name="Peterson J.D."/>
            <person name="Sadow P.W."/>
            <person name="Hanna M.C."/>
            <person name="Cotton M.D."/>
            <person name="Roberts K.M."/>
            <person name="Hurst M.A."/>
            <person name="Kaine B.P."/>
            <person name="Borodovsky M."/>
            <person name="Klenk H.-P."/>
            <person name="Fraser C.M."/>
            <person name="Smith H.O."/>
            <person name="Woese C.R."/>
            <person name="Venter J.C."/>
        </authorList>
    </citation>
    <scope>NUCLEOTIDE SEQUENCE [LARGE SCALE GENOMIC DNA]</scope>
    <source>
        <strain>ATCC 43067 / DSM 2661 / JAL-1 / JCM 10045 / NBRC 100440</strain>
    </source>
</reference>
<accession>Q58474</accession>
<keyword id="KW-0472">Membrane</keyword>
<keyword id="KW-1185">Reference proteome</keyword>
<keyword id="KW-0812">Transmembrane</keyword>
<keyword id="KW-1133">Transmembrane helix</keyword>
<dbReference type="EMBL" id="L77117">
    <property type="protein sequence ID" value="AAB99080.1"/>
    <property type="molecule type" value="Genomic_DNA"/>
</dbReference>
<dbReference type="PIR" id="A64434">
    <property type="entry name" value="A64434"/>
</dbReference>
<dbReference type="RefSeq" id="WP_010870586.1">
    <property type="nucleotide sequence ID" value="NC_000909.1"/>
</dbReference>
<dbReference type="SMR" id="Q58474"/>
<dbReference type="STRING" id="243232.MJ_1074"/>
<dbReference type="PaxDb" id="243232-MJ_1074"/>
<dbReference type="EnsemblBacteria" id="AAB99080">
    <property type="protein sequence ID" value="AAB99080"/>
    <property type="gene ID" value="MJ_1074"/>
</dbReference>
<dbReference type="GeneID" id="1451970"/>
<dbReference type="KEGG" id="mja:MJ_1074"/>
<dbReference type="eggNOG" id="arCOG09652">
    <property type="taxonomic scope" value="Archaea"/>
</dbReference>
<dbReference type="HOGENOM" id="CLU_165881_0_0_2"/>
<dbReference type="InParanoid" id="Q58474"/>
<dbReference type="OrthoDB" id="66010at2157"/>
<dbReference type="PhylomeDB" id="Q58474"/>
<dbReference type="Proteomes" id="UP000000805">
    <property type="component" value="Chromosome"/>
</dbReference>
<dbReference type="GO" id="GO:0016020">
    <property type="term" value="C:membrane"/>
    <property type="evidence" value="ECO:0007669"/>
    <property type="project" value="UniProtKB-SubCell"/>
</dbReference>
<organism>
    <name type="scientific">Methanocaldococcus jannaschii (strain ATCC 43067 / DSM 2661 / JAL-1 / JCM 10045 / NBRC 100440)</name>
    <name type="common">Methanococcus jannaschii</name>
    <dbReference type="NCBI Taxonomy" id="243232"/>
    <lineage>
        <taxon>Archaea</taxon>
        <taxon>Methanobacteriati</taxon>
        <taxon>Methanobacteriota</taxon>
        <taxon>Methanomada group</taxon>
        <taxon>Methanococci</taxon>
        <taxon>Methanococcales</taxon>
        <taxon>Methanocaldococcaceae</taxon>
        <taxon>Methanocaldococcus</taxon>
    </lineage>
</organism>
<evidence type="ECO:0000255" key="1"/>
<evidence type="ECO:0000305" key="2"/>
<gene>
    <name type="ordered locus">MJ1074</name>
</gene>
<proteinExistence type="inferred from homology"/>
<name>Y1074_METJA</name>